<protein>
    <recommendedName>
        <fullName>Phosphocarrier protein HPr</fullName>
    </recommendedName>
    <alternativeName>
        <fullName>Histidine-containing protein</fullName>
    </alternativeName>
</protein>
<accession>P0AA06</accession>
<accession>P05525</accession>
<accession>P07006</accession>
<comment type="function">
    <text evidence="1">General (non sugar-specific) component of the phosphoenolpyruvate-dependent sugar phosphotransferase system (sugar PTS). This major carbohydrate active-transport system catalyzes the phosphorylation of incoming sugar substrates concomitantly with their translocation across the cell membrane. The phosphoryl group from phosphoenolpyruvate (PEP) is transferred to the phosphoryl carrier protein HPr by enzyme I. Phospho-HPr then transfers it to the PTS EIIA domain.</text>
</comment>
<comment type="subcellular location">
    <subcellularLocation>
        <location evidence="1">Cytoplasm</location>
    </subcellularLocation>
</comment>
<comment type="similarity">
    <text evidence="3">Belongs to the HPr family.</text>
</comment>
<proteinExistence type="inferred from homology"/>
<reference key="1">
    <citation type="journal article" date="2001" name="Nature">
        <title>Genome sequence of enterohaemorrhagic Escherichia coli O157:H7.</title>
        <authorList>
            <person name="Perna N.T."/>
            <person name="Plunkett G. III"/>
            <person name="Burland V."/>
            <person name="Mau B."/>
            <person name="Glasner J.D."/>
            <person name="Rose D.J."/>
            <person name="Mayhew G.F."/>
            <person name="Evans P.S."/>
            <person name="Gregor J."/>
            <person name="Kirkpatrick H.A."/>
            <person name="Posfai G."/>
            <person name="Hackett J."/>
            <person name="Klink S."/>
            <person name="Boutin A."/>
            <person name="Shao Y."/>
            <person name="Miller L."/>
            <person name="Grotbeck E.J."/>
            <person name="Davis N.W."/>
            <person name="Lim A."/>
            <person name="Dimalanta E.T."/>
            <person name="Potamousis K."/>
            <person name="Apodaca J."/>
            <person name="Anantharaman T.S."/>
            <person name="Lin J."/>
            <person name="Yen G."/>
            <person name="Schwartz D.C."/>
            <person name="Welch R.A."/>
            <person name="Blattner F.R."/>
        </authorList>
    </citation>
    <scope>NUCLEOTIDE SEQUENCE [LARGE SCALE GENOMIC DNA]</scope>
    <source>
        <strain>O157:H7 / EDL933 / ATCC 700927 / EHEC</strain>
    </source>
</reference>
<reference key="2">
    <citation type="journal article" date="2001" name="DNA Res.">
        <title>Complete genome sequence of enterohemorrhagic Escherichia coli O157:H7 and genomic comparison with a laboratory strain K-12.</title>
        <authorList>
            <person name="Hayashi T."/>
            <person name="Makino K."/>
            <person name="Ohnishi M."/>
            <person name="Kurokawa K."/>
            <person name="Ishii K."/>
            <person name="Yokoyama K."/>
            <person name="Han C.-G."/>
            <person name="Ohtsubo E."/>
            <person name="Nakayama K."/>
            <person name="Murata T."/>
            <person name="Tanaka M."/>
            <person name="Tobe T."/>
            <person name="Iida T."/>
            <person name="Takami H."/>
            <person name="Honda T."/>
            <person name="Sasakawa C."/>
            <person name="Ogasawara N."/>
            <person name="Yasunaga T."/>
            <person name="Kuhara S."/>
            <person name="Shiba T."/>
            <person name="Hattori M."/>
            <person name="Shinagawa H."/>
        </authorList>
    </citation>
    <scope>NUCLEOTIDE SEQUENCE [LARGE SCALE GENOMIC DNA]</scope>
    <source>
        <strain>O157:H7 / Sakai / RIMD 0509952 / EHEC</strain>
    </source>
</reference>
<organism>
    <name type="scientific">Escherichia coli O157:H7</name>
    <dbReference type="NCBI Taxonomy" id="83334"/>
    <lineage>
        <taxon>Bacteria</taxon>
        <taxon>Pseudomonadati</taxon>
        <taxon>Pseudomonadota</taxon>
        <taxon>Gammaproteobacteria</taxon>
        <taxon>Enterobacterales</taxon>
        <taxon>Enterobacteriaceae</taxon>
        <taxon>Escherichia</taxon>
    </lineage>
</organism>
<dbReference type="EMBL" id="AE005174">
    <property type="protein sequence ID" value="AAG57534.1"/>
    <property type="molecule type" value="Genomic_DNA"/>
</dbReference>
<dbReference type="EMBL" id="BA000007">
    <property type="protein sequence ID" value="BAB36710.1"/>
    <property type="molecule type" value="Genomic_DNA"/>
</dbReference>
<dbReference type="PIR" id="B85884">
    <property type="entry name" value="B85884"/>
</dbReference>
<dbReference type="PIR" id="G91039">
    <property type="entry name" value="G91039"/>
</dbReference>
<dbReference type="RefSeq" id="NP_311314.1">
    <property type="nucleotide sequence ID" value="NC_002695.1"/>
</dbReference>
<dbReference type="RefSeq" id="WP_000487600.1">
    <property type="nucleotide sequence ID" value="NZ_VOAI01000001.1"/>
</dbReference>
<dbReference type="BMRB" id="P0AA06"/>
<dbReference type="SMR" id="P0AA06"/>
<dbReference type="MINT" id="P0AA06"/>
<dbReference type="STRING" id="155864.Z3681"/>
<dbReference type="GeneID" id="915540"/>
<dbReference type="GeneID" id="97602767"/>
<dbReference type="KEGG" id="ece:Z3681"/>
<dbReference type="KEGG" id="ecs:ECs_3287"/>
<dbReference type="PATRIC" id="fig|386585.9.peg.3434"/>
<dbReference type="eggNOG" id="COG1925">
    <property type="taxonomic scope" value="Bacteria"/>
</dbReference>
<dbReference type="HOGENOM" id="CLU_136230_2_3_6"/>
<dbReference type="OMA" id="APHGIHT"/>
<dbReference type="Proteomes" id="UP000000558">
    <property type="component" value="Chromosome"/>
</dbReference>
<dbReference type="Proteomes" id="UP000002519">
    <property type="component" value="Chromosome"/>
</dbReference>
<dbReference type="GO" id="GO:0005737">
    <property type="term" value="C:cytoplasm"/>
    <property type="evidence" value="ECO:0007669"/>
    <property type="project" value="UniProtKB-SubCell"/>
</dbReference>
<dbReference type="GO" id="GO:0009401">
    <property type="term" value="P:phosphoenolpyruvate-dependent sugar phosphotransferase system"/>
    <property type="evidence" value="ECO:0007669"/>
    <property type="project" value="UniProtKB-KW"/>
</dbReference>
<dbReference type="CDD" id="cd00367">
    <property type="entry name" value="PTS-HPr_like"/>
    <property type="match status" value="1"/>
</dbReference>
<dbReference type="FunFam" id="3.30.1340.10:FF:000001">
    <property type="entry name" value="Phosphocarrier, HPr family"/>
    <property type="match status" value="1"/>
</dbReference>
<dbReference type="Gene3D" id="3.30.1340.10">
    <property type="entry name" value="HPr-like"/>
    <property type="match status" value="1"/>
</dbReference>
<dbReference type="InterPro" id="IPR050399">
    <property type="entry name" value="HPr"/>
</dbReference>
<dbReference type="InterPro" id="IPR000032">
    <property type="entry name" value="HPr-like"/>
</dbReference>
<dbReference type="InterPro" id="IPR035895">
    <property type="entry name" value="HPr-like_sf"/>
</dbReference>
<dbReference type="InterPro" id="IPR001020">
    <property type="entry name" value="PTS_HPr_His_P_site"/>
</dbReference>
<dbReference type="InterPro" id="IPR002114">
    <property type="entry name" value="PTS_HPr_Ser_P_site"/>
</dbReference>
<dbReference type="NCBIfam" id="NF008104">
    <property type="entry name" value="PRK10850.1"/>
    <property type="match status" value="1"/>
</dbReference>
<dbReference type="NCBIfam" id="TIGR01003">
    <property type="entry name" value="PTS_HPr_family"/>
    <property type="match status" value="1"/>
</dbReference>
<dbReference type="PANTHER" id="PTHR33705">
    <property type="entry name" value="PHOSPHOCARRIER PROTEIN HPR"/>
    <property type="match status" value="1"/>
</dbReference>
<dbReference type="PANTHER" id="PTHR33705:SF1">
    <property type="entry name" value="PHOSPHOCARRIER PROTEIN HPR"/>
    <property type="match status" value="1"/>
</dbReference>
<dbReference type="Pfam" id="PF00381">
    <property type="entry name" value="PTS-HPr"/>
    <property type="match status" value="1"/>
</dbReference>
<dbReference type="PRINTS" id="PR00107">
    <property type="entry name" value="PHOSPHOCPHPR"/>
</dbReference>
<dbReference type="SUPFAM" id="SSF55594">
    <property type="entry name" value="HPr-like"/>
    <property type="match status" value="1"/>
</dbReference>
<dbReference type="PROSITE" id="PS51350">
    <property type="entry name" value="PTS_HPR_DOM"/>
    <property type="match status" value="1"/>
</dbReference>
<dbReference type="PROSITE" id="PS00369">
    <property type="entry name" value="PTS_HPR_HIS"/>
    <property type="match status" value="1"/>
</dbReference>
<dbReference type="PROSITE" id="PS00589">
    <property type="entry name" value="PTS_HPR_SER"/>
    <property type="match status" value="1"/>
</dbReference>
<feature type="chain" id="PRO_0000107852" description="Phosphocarrier protein HPr">
    <location>
        <begin position="1"/>
        <end position="85"/>
    </location>
</feature>
<feature type="domain" description="HPr" evidence="2">
    <location>
        <begin position="1"/>
        <end position="85"/>
    </location>
</feature>
<feature type="active site" description="Pros-phosphohistidine intermediate" evidence="2">
    <location>
        <position position="15"/>
    </location>
</feature>
<keyword id="KW-0963">Cytoplasm</keyword>
<keyword id="KW-0598">Phosphotransferase system</keyword>
<keyword id="KW-1185">Reference proteome</keyword>
<keyword id="KW-0762">Sugar transport</keyword>
<keyword id="KW-0813">Transport</keyword>
<sequence>MFQQEVTITAPNGLHTRPAAQFVKEAKGFTSEITVTSNGKSASAKSLFKLQTLGLTQGTVVTISAEGEDEQKAVEHLVKLMAELE</sequence>
<gene>
    <name type="primary">ptsH</name>
    <name type="ordered locus">Z3681</name>
    <name type="ordered locus">ECs3287</name>
</gene>
<name>PTHP_ECO57</name>
<evidence type="ECO:0000250" key="1"/>
<evidence type="ECO:0000255" key="2">
    <source>
        <dbReference type="PROSITE-ProRule" id="PRU00681"/>
    </source>
</evidence>
<evidence type="ECO:0000305" key="3"/>